<dbReference type="EC" id="7.1.1.-" evidence="1"/>
<dbReference type="EMBL" id="EF614270">
    <property type="protein sequence ID" value="ABQ81453.1"/>
    <property type="molecule type" value="Genomic_DNA"/>
</dbReference>
<dbReference type="RefSeq" id="YP_001542450.1">
    <property type="nucleotide sequence ID" value="NC_009962.1"/>
</dbReference>
<dbReference type="SMR" id="A8SEA6"/>
<dbReference type="GeneID" id="5729459"/>
<dbReference type="GO" id="GO:0009535">
    <property type="term" value="C:chloroplast thylakoid membrane"/>
    <property type="evidence" value="ECO:0007669"/>
    <property type="project" value="UniProtKB-SubCell"/>
</dbReference>
<dbReference type="GO" id="GO:0008137">
    <property type="term" value="F:NADH dehydrogenase (ubiquinone) activity"/>
    <property type="evidence" value="ECO:0007669"/>
    <property type="project" value="InterPro"/>
</dbReference>
<dbReference type="GO" id="GO:0048038">
    <property type="term" value="F:quinone binding"/>
    <property type="evidence" value="ECO:0007669"/>
    <property type="project" value="UniProtKB-KW"/>
</dbReference>
<dbReference type="GO" id="GO:0019684">
    <property type="term" value="P:photosynthesis, light reaction"/>
    <property type="evidence" value="ECO:0007669"/>
    <property type="project" value="UniProtKB-UniRule"/>
</dbReference>
<dbReference type="FunFam" id="3.30.460.80:FF:000004">
    <property type="entry name" value="NAD(P)H-quinone oxidoreductase subunit J, chloroplastic"/>
    <property type="match status" value="1"/>
</dbReference>
<dbReference type="Gene3D" id="3.30.460.80">
    <property type="entry name" value="NADH:ubiquinone oxidoreductase, 30kDa subunit"/>
    <property type="match status" value="1"/>
</dbReference>
<dbReference type="HAMAP" id="MF_01357">
    <property type="entry name" value="NDH1_NuoC"/>
    <property type="match status" value="1"/>
</dbReference>
<dbReference type="InterPro" id="IPR010218">
    <property type="entry name" value="NADH_DH_suC"/>
</dbReference>
<dbReference type="InterPro" id="IPR037232">
    <property type="entry name" value="NADH_quin_OxRdtase_su_C/D-like"/>
</dbReference>
<dbReference type="InterPro" id="IPR001268">
    <property type="entry name" value="NADH_UbQ_OxRdtase_30kDa_su"/>
</dbReference>
<dbReference type="InterPro" id="IPR020396">
    <property type="entry name" value="NADH_UbQ_OxRdtase_CS"/>
</dbReference>
<dbReference type="NCBIfam" id="NF009141">
    <property type="entry name" value="PRK12494.1"/>
    <property type="match status" value="1"/>
</dbReference>
<dbReference type="PANTHER" id="PTHR10884:SF14">
    <property type="entry name" value="NADH DEHYDROGENASE [UBIQUINONE] IRON-SULFUR PROTEIN 3, MITOCHONDRIAL"/>
    <property type="match status" value="1"/>
</dbReference>
<dbReference type="PANTHER" id="PTHR10884">
    <property type="entry name" value="NADH DEHYDROGENASE UBIQUINONE IRON-SULFUR PROTEIN 3"/>
    <property type="match status" value="1"/>
</dbReference>
<dbReference type="Pfam" id="PF00329">
    <property type="entry name" value="Complex1_30kDa"/>
    <property type="match status" value="1"/>
</dbReference>
<dbReference type="SUPFAM" id="SSF143243">
    <property type="entry name" value="Nqo5-like"/>
    <property type="match status" value="1"/>
</dbReference>
<dbReference type="PROSITE" id="PS00542">
    <property type="entry name" value="COMPLEX1_30K"/>
    <property type="match status" value="1"/>
</dbReference>
<comment type="function">
    <text evidence="1">NDH shuttles electrons from NAD(P)H:plastoquinone, via FMN and iron-sulfur (Fe-S) centers, to quinones in the photosynthetic chain and possibly in a chloroplast respiratory chain. The immediate electron acceptor for the enzyme in this species is believed to be plastoquinone. Couples the redox reaction to proton translocation, and thus conserves the redox energy in a proton gradient.</text>
</comment>
<comment type="catalytic activity">
    <reaction evidence="1">
        <text>a plastoquinone + NADH + (n+1) H(+)(in) = a plastoquinol + NAD(+) + n H(+)(out)</text>
        <dbReference type="Rhea" id="RHEA:42608"/>
        <dbReference type="Rhea" id="RHEA-COMP:9561"/>
        <dbReference type="Rhea" id="RHEA-COMP:9562"/>
        <dbReference type="ChEBI" id="CHEBI:15378"/>
        <dbReference type="ChEBI" id="CHEBI:17757"/>
        <dbReference type="ChEBI" id="CHEBI:57540"/>
        <dbReference type="ChEBI" id="CHEBI:57945"/>
        <dbReference type="ChEBI" id="CHEBI:62192"/>
    </reaction>
</comment>
<comment type="catalytic activity">
    <reaction evidence="1">
        <text>a plastoquinone + NADPH + (n+1) H(+)(in) = a plastoquinol + NADP(+) + n H(+)(out)</text>
        <dbReference type="Rhea" id="RHEA:42612"/>
        <dbReference type="Rhea" id="RHEA-COMP:9561"/>
        <dbReference type="Rhea" id="RHEA-COMP:9562"/>
        <dbReference type="ChEBI" id="CHEBI:15378"/>
        <dbReference type="ChEBI" id="CHEBI:17757"/>
        <dbReference type="ChEBI" id="CHEBI:57783"/>
        <dbReference type="ChEBI" id="CHEBI:58349"/>
        <dbReference type="ChEBI" id="CHEBI:62192"/>
    </reaction>
</comment>
<comment type="subunit">
    <text evidence="1">NDH is composed of at least 16 different subunits, 5 of which are encoded in the nucleus.</text>
</comment>
<comment type="subcellular location">
    <subcellularLocation>
        <location evidence="1">Plastid</location>
        <location evidence="1">Chloroplast thylakoid membrane</location>
        <topology evidence="1">Peripheral membrane protein</topology>
        <orientation evidence="1">Stromal side</orientation>
    </subcellularLocation>
</comment>
<comment type="similarity">
    <text evidence="1">Belongs to the complex I 30 kDa subunit family.</text>
</comment>
<accession>A8SEA6</accession>
<sequence>MQGRSSAWLVKHELVHRSLGFDYQGIETLQIKPEDWYSIAVISYVYGYNYLRSQCAYDVAPGGLLASVYHLTRIQYGVDQPEEVCIKVFAPRGNPRIPSVFWIWKSADFQERESYDMFGISYDNHPRLKRILMPESWIGWPLRKDYIAPDFYEIQDAY</sequence>
<proteinExistence type="inferred from homology"/>
<protein>
    <recommendedName>
        <fullName evidence="1">NAD(P)H-quinone oxidoreductase subunit J, chloroplastic</fullName>
        <ecNumber evidence="1">7.1.1.-</ecNumber>
    </recommendedName>
    <alternativeName>
        <fullName>NAD(P)H dehydrogenase subunit J</fullName>
    </alternativeName>
    <alternativeName>
        <fullName evidence="1">NADH-plastoquinone oxidoreductase subunit J</fullName>
    </alternativeName>
</protein>
<name>NDHJ_CERDE</name>
<organism>
    <name type="scientific">Ceratophyllum demersum</name>
    <name type="common">Rigid hornwort</name>
    <name type="synonym">Coontail</name>
    <dbReference type="NCBI Taxonomy" id="4428"/>
    <lineage>
        <taxon>Eukaryota</taxon>
        <taxon>Viridiplantae</taxon>
        <taxon>Streptophyta</taxon>
        <taxon>Embryophyta</taxon>
        <taxon>Tracheophyta</taxon>
        <taxon>Spermatophyta</taxon>
        <taxon>Magnoliopsida</taxon>
        <taxon>Ceratophyllales</taxon>
        <taxon>Ceratophyllaceae</taxon>
        <taxon>Ceratophyllum</taxon>
    </lineage>
</organism>
<gene>
    <name evidence="1" type="primary">ndhJ</name>
</gene>
<evidence type="ECO:0000255" key="1">
    <source>
        <dbReference type="HAMAP-Rule" id="MF_01357"/>
    </source>
</evidence>
<keyword id="KW-0150">Chloroplast</keyword>
<keyword id="KW-0472">Membrane</keyword>
<keyword id="KW-0520">NAD</keyword>
<keyword id="KW-0521">NADP</keyword>
<keyword id="KW-0934">Plastid</keyword>
<keyword id="KW-0618">Plastoquinone</keyword>
<keyword id="KW-0874">Quinone</keyword>
<keyword id="KW-0793">Thylakoid</keyword>
<keyword id="KW-1278">Translocase</keyword>
<keyword id="KW-0813">Transport</keyword>
<reference key="1">
    <citation type="journal article" date="2007" name="Proc. Natl. Acad. Sci. U.S.A.">
        <title>Using plastid genome-scale data to resolve enigmatic relationships among basal angiosperms.</title>
        <authorList>
            <person name="Moore M.J."/>
            <person name="Bell C.D."/>
            <person name="Soltis P.S."/>
            <person name="Soltis D.E."/>
        </authorList>
    </citation>
    <scope>NUCLEOTIDE SEQUENCE [LARGE SCALE GENOMIC DNA]</scope>
</reference>
<geneLocation type="chloroplast"/>
<feature type="chain" id="PRO_0000358250" description="NAD(P)H-quinone oxidoreductase subunit J, chloroplastic">
    <location>
        <begin position="1"/>
        <end position="158"/>
    </location>
</feature>